<reference key="1">
    <citation type="journal article" date="2006" name="Genome Res.">
        <title>Massive genome erosion and functional adaptations provide insights into the symbiotic lifestyle of Sodalis glossinidius in the tsetse host.</title>
        <authorList>
            <person name="Toh H."/>
            <person name="Weiss B.L."/>
            <person name="Perkin S.A.H."/>
            <person name="Yamashita A."/>
            <person name="Oshima K."/>
            <person name="Hattori M."/>
            <person name="Aksoy S."/>
        </authorList>
    </citation>
    <scope>NUCLEOTIDE SEQUENCE [LARGE SCALE GENOMIC DNA]</scope>
    <source>
        <strain>morsitans</strain>
    </source>
</reference>
<gene>
    <name type="ordered locus">SG1054</name>
</gene>
<organism>
    <name type="scientific">Sodalis glossinidius (strain morsitans)</name>
    <dbReference type="NCBI Taxonomy" id="343509"/>
    <lineage>
        <taxon>Bacteria</taxon>
        <taxon>Pseudomonadati</taxon>
        <taxon>Pseudomonadota</taxon>
        <taxon>Gammaproteobacteria</taxon>
        <taxon>Enterobacterales</taxon>
        <taxon>Bruguierivoracaceae</taxon>
        <taxon>Sodalis</taxon>
    </lineage>
</organism>
<keyword id="KW-0963">Cytoplasm</keyword>
<keyword id="KW-0378">Hydrolase</keyword>
<keyword id="KW-0546">Nucleotide metabolism</keyword>
<proteinExistence type="inferred from homology"/>
<sequence length="194" mass="20963">MHKIVLASSSPYRRALLEKLRIPFEFHAPDIDETPHAGEEAAPMVQRLAIAKAQALAERYPRHLIIGADQCCVLDGQIAGKPLTEANAIAQLTSAHGKAVTFYTGLALLNSASGALQACTEPFVVRFRALEDAEIAGYVHLEQPLQCAGSFQCEGLGIALFEALEGRDPNTLIGLPLLALADMLRREGVNPLRR</sequence>
<feature type="chain" id="PRO_0000267440" description="7-methyl-GTP pyrophosphatase">
    <location>
        <begin position="1"/>
        <end position="194"/>
    </location>
</feature>
<feature type="active site" description="Proton acceptor" evidence="1">
    <location>
        <position position="69"/>
    </location>
</feature>
<feature type="site" description="Important for substrate specificity" evidence="1">
    <location>
        <position position="12"/>
    </location>
</feature>
<feature type="site" description="Important for substrate specificity" evidence="1">
    <location>
        <position position="70"/>
    </location>
</feature>
<feature type="site" description="Important for substrate specificity" evidence="1">
    <location>
        <position position="154"/>
    </location>
</feature>
<accession>Q2NU46</accession>
<evidence type="ECO:0000255" key="1">
    <source>
        <dbReference type="HAMAP-Rule" id="MF_00528"/>
    </source>
</evidence>
<comment type="function">
    <text evidence="1">Nucleoside triphosphate pyrophosphatase that hydrolyzes 7-methyl-GTP (m(7)GTP). May have a dual role in cell division arrest and in preventing the incorporation of modified nucleotides into cellular nucleic acids.</text>
</comment>
<comment type="catalytic activity">
    <reaction evidence="1">
        <text>N(7)-methyl-GTP + H2O = N(7)-methyl-GMP + diphosphate + H(+)</text>
        <dbReference type="Rhea" id="RHEA:58744"/>
        <dbReference type="ChEBI" id="CHEBI:15377"/>
        <dbReference type="ChEBI" id="CHEBI:15378"/>
        <dbReference type="ChEBI" id="CHEBI:33019"/>
        <dbReference type="ChEBI" id="CHEBI:58285"/>
        <dbReference type="ChEBI" id="CHEBI:87133"/>
    </reaction>
</comment>
<comment type="cofactor">
    <cofactor evidence="1">
        <name>a divalent metal cation</name>
        <dbReference type="ChEBI" id="CHEBI:60240"/>
    </cofactor>
</comment>
<comment type="subcellular location">
    <subcellularLocation>
        <location evidence="1">Cytoplasm</location>
    </subcellularLocation>
</comment>
<comment type="similarity">
    <text evidence="1">Belongs to the Maf family. YceF subfamily.</text>
</comment>
<name>NTPPB_SODGM</name>
<protein>
    <recommendedName>
        <fullName evidence="1">7-methyl-GTP pyrophosphatase</fullName>
        <shortName evidence="1">m(7)GTP pyrophosphatase</shortName>
        <ecNumber evidence="1">3.6.1.-</ecNumber>
    </recommendedName>
</protein>
<dbReference type="EC" id="3.6.1.-" evidence="1"/>
<dbReference type="EMBL" id="AP008232">
    <property type="protein sequence ID" value="BAE74329.1"/>
    <property type="molecule type" value="Genomic_DNA"/>
</dbReference>
<dbReference type="RefSeq" id="WP_011410914.1">
    <property type="nucleotide sequence ID" value="NC_007712.1"/>
</dbReference>
<dbReference type="SMR" id="Q2NU46"/>
<dbReference type="STRING" id="343509.SG1054"/>
<dbReference type="KEGG" id="sgl:SG1054"/>
<dbReference type="eggNOG" id="COG0424">
    <property type="taxonomic scope" value="Bacteria"/>
</dbReference>
<dbReference type="HOGENOM" id="CLU_040416_1_0_6"/>
<dbReference type="OrthoDB" id="9813694at2"/>
<dbReference type="BioCyc" id="SGLO343509:SGP1_RS09125-MONOMER"/>
<dbReference type="Proteomes" id="UP000001932">
    <property type="component" value="Chromosome"/>
</dbReference>
<dbReference type="GO" id="GO:0005737">
    <property type="term" value="C:cytoplasm"/>
    <property type="evidence" value="ECO:0007669"/>
    <property type="project" value="UniProtKB-SubCell"/>
</dbReference>
<dbReference type="GO" id="GO:0047429">
    <property type="term" value="F:nucleoside triphosphate diphosphatase activity"/>
    <property type="evidence" value="ECO:0007669"/>
    <property type="project" value="InterPro"/>
</dbReference>
<dbReference type="GO" id="GO:0009117">
    <property type="term" value="P:nucleotide metabolic process"/>
    <property type="evidence" value="ECO:0007669"/>
    <property type="project" value="UniProtKB-KW"/>
</dbReference>
<dbReference type="CDD" id="cd00555">
    <property type="entry name" value="Maf"/>
    <property type="match status" value="1"/>
</dbReference>
<dbReference type="FunFam" id="3.90.950.10:FF:000005">
    <property type="entry name" value="7-methyl-GTP pyrophosphatase"/>
    <property type="match status" value="1"/>
</dbReference>
<dbReference type="Gene3D" id="3.90.950.10">
    <property type="match status" value="1"/>
</dbReference>
<dbReference type="HAMAP" id="MF_00528">
    <property type="entry name" value="Maf"/>
    <property type="match status" value="1"/>
</dbReference>
<dbReference type="InterPro" id="IPR029001">
    <property type="entry name" value="ITPase-like_fam"/>
</dbReference>
<dbReference type="InterPro" id="IPR003697">
    <property type="entry name" value="Maf-like"/>
</dbReference>
<dbReference type="NCBIfam" id="TIGR00172">
    <property type="entry name" value="maf"/>
    <property type="match status" value="1"/>
</dbReference>
<dbReference type="PANTHER" id="PTHR43213:SF10">
    <property type="entry name" value="7-METHYL-GTP PYROPHOSPHATASE"/>
    <property type="match status" value="1"/>
</dbReference>
<dbReference type="PANTHER" id="PTHR43213">
    <property type="entry name" value="BIFUNCTIONAL DTTP/UTP PYROPHOSPHATASE/METHYLTRANSFERASE PROTEIN-RELATED"/>
    <property type="match status" value="1"/>
</dbReference>
<dbReference type="Pfam" id="PF02545">
    <property type="entry name" value="Maf"/>
    <property type="match status" value="1"/>
</dbReference>
<dbReference type="PIRSF" id="PIRSF006305">
    <property type="entry name" value="Maf"/>
    <property type="match status" value="1"/>
</dbReference>
<dbReference type="SUPFAM" id="SSF52972">
    <property type="entry name" value="ITPase-like"/>
    <property type="match status" value="1"/>
</dbReference>